<organism>
    <name type="scientific">Porphyromonas gingivalis (strain ATCC BAA-308 / W83)</name>
    <dbReference type="NCBI Taxonomy" id="242619"/>
    <lineage>
        <taxon>Bacteria</taxon>
        <taxon>Pseudomonadati</taxon>
        <taxon>Bacteroidota</taxon>
        <taxon>Bacteroidia</taxon>
        <taxon>Bacteroidales</taxon>
        <taxon>Porphyromonadaceae</taxon>
        <taxon>Porphyromonas</taxon>
    </lineage>
</organism>
<sequence length="65" mass="7496">MPKLKTNSGAKKRFALTGTGKIKRKHAFKSHILTKKTKKQKRNLTYFSTVHKVDENAVKQLLCLR</sequence>
<name>RL35_PORGI</name>
<proteinExistence type="inferred from homology"/>
<keyword id="KW-1185">Reference proteome</keyword>
<keyword id="KW-0687">Ribonucleoprotein</keyword>
<keyword id="KW-0689">Ribosomal protein</keyword>
<dbReference type="EMBL" id="AE015924">
    <property type="protein sequence ID" value="AAQ66113.1"/>
    <property type="molecule type" value="Genomic_DNA"/>
</dbReference>
<dbReference type="RefSeq" id="WP_004584226.1">
    <property type="nucleotide sequence ID" value="NC_002950.2"/>
</dbReference>
<dbReference type="SMR" id="Q7MVQ7"/>
<dbReference type="STRING" id="242619.PG_0990"/>
<dbReference type="EnsemblBacteria" id="AAQ66113">
    <property type="protein sequence ID" value="AAQ66113"/>
    <property type="gene ID" value="PG_0990"/>
</dbReference>
<dbReference type="GeneID" id="29256176"/>
<dbReference type="GeneID" id="57239258"/>
<dbReference type="KEGG" id="pgi:PG_0990"/>
<dbReference type="eggNOG" id="COG0291">
    <property type="taxonomic scope" value="Bacteria"/>
</dbReference>
<dbReference type="HOGENOM" id="CLU_169643_3_0_10"/>
<dbReference type="Proteomes" id="UP000000588">
    <property type="component" value="Chromosome"/>
</dbReference>
<dbReference type="GO" id="GO:0022625">
    <property type="term" value="C:cytosolic large ribosomal subunit"/>
    <property type="evidence" value="ECO:0007669"/>
    <property type="project" value="TreeGrafter"/>
</dbReference>
<dbReference type="GO" id="GO:0003735">
    <property type="term" value="F:structural constituent of ribosome"/>
    <property type="evidence" value="ECO:0007669"/>
    <property type="project" value="InterPro"/>
</dbReference>
<dbReference type="GO" id="GO:0006412">
    <property type="term" value="P:translation"/>
    <property type="evidence" value="ECO:0007669"/>
    <property type="project" value="UniProtKB-UniRule"/>
</dbReference>
<dbReference type="FunFam" id="4.10.410.60:FF:000001">
    <property type="entry name" value="50S ribosomal protein L35"/>
    <property type="match status" value="1"/>
</dbReference>
<dbReference type="Gene3D" id="4.10.410.60">
    <property type="match status" value="1"/>
</dbReference>
<dbReference type="HAMAP" id="MF_00514">
    <property type="entry name" value="Ribosomal_bL35"/>
    <property type="match status" value="1"/>
</dbReference>
<dbReference type="InterPro" id="IPR001706">
    <property type="entry name" value="Ribosomal_bL35"/>
</dbReference>
<dbReference type="InterPro" id="IPR021137">
    <property type="entry name" value="Ribosomal_bL35-like"/>
</dbReference>
<dbReference type="InterPro" id="IPR018265">
    <property type="entry name" value="Ribosomal_bL35_CS"/>
</dbReference>
<dbReference type="InterPro" id="IPR037229">
    <property type="entry name" value="Ribosomal_bL35_sf"/>
</dbReference>
<dbReference type="NCBIfam" id="TIGR00001">
    <property type="entry name" value="rpmI_bact"/>
    <property type="match status" value="1"/>
</dbReference>
<dbReference type="PANTHER" id="PTHR33343">
    <property type="entry name" value="54S RIBOSOMAL PROTEIN BL35M"/>
    <property type="match status" value="1"/>
</dbReference>
<dbReference type="PANTHER" id="PTHR33343:SF1">
    <property type="entry name" value="LARGE RIBOSOMAL SUBUNIT PROTEIN BL35M"/>
    <property type="match status" value="1"/>
</dbReference>
<dbReference type="Pfam" id="PF01632">
    <property type="entry name" value="Ribosomal_L35p"/>
    <property type="match status" value="1"/>
</dbReference>
<dbReference type="PRINTS" id="PR00064">
    <property type="entry name" value="RIBOSOMALL35"/>
</dbReference>
<dbReference type="SUPFAM" id="SSF143034">
    <property type="entry name" value="L35p-like"/>
    <property type="match status" value="1"/>
</dbReference>
<dbReference type="PROSITE" id="PS00936">
    <property type="entry name" value="RIBOSOMAL_L35"/>
    <property type="match status" value="1"/>
</dbReference>
<reference key="1">
    <citation type="journal article" date="2003" name="J. Bacteriol.">
        <title>Complete genome sequence of the oral pathogenic bacterium Porphyromonas gingivalis strain W83.</title>
        <authorList>
            <person name="Nelson K.E."/>
            <person name="Fleischmann R.D."/>
            <person name="DeBoy R.T."/>
            <person name="Paulsen I.T."/>
            <person name="Fouts D.E."/>
            <person name="Eisen J.A."/>
            <person name="Daugherty S.C."/>
            <person name="Dodson R.J."/>
            <person name="Durkin A.S."/>
            <person name="Gwinn M.L."/>
            <person name="Haft D.H."/>
            <person name="Kolonay J.F."/>
            <person name="Nelson W.C."/>
            <person name="Mason T.M."/>
            <person name="Tallon L."/>
            <person name="Gray J."/>
            <person name="Granger D."/>
            <person name="Tettelin H."/>
            <person name="Dong H."/>
            <person name="Galvin J.L."/>
            <person name="Duncan M.J."/>
            <person name="Dewhirst F.E."/>
            <person name="Fraser C.M."/>
        </authorList>
    </citation>
    <scope>NUCLEOTIDE SEQUENCE [LARGE SCALE GENOMIC DNA]</scope>
    <source>
        <strain>ATCC BAA-308 / W83</strain>
    </source>
</reference>
<evidence type="ECO:0000255" key="1">
    <source>
        <dbReference type="HAMAP-Rule" id="MF_00514"/>
    </source>
</evidence>
<evidence type="ECO:0000305" key="2"/>
<protein>
    <recommendedName>
        <fullName evidence="1">Large ribosomal subunit protein bL35</fullName>
    </recommendedName>
    <alternativeName>
        <fullName evidence="2">50S ribosomal protein L35</fullName>
    </alternativeName>
</protein>
<accession>Q7MVQ7</accession>
<gene>
    <name evidence="1" type="primary">rpmI</name>
    <name type="ordered locus">PG_0990</name>
</gene>
<comment type="similarity">
    <text evidence="1">Belongs to the bacterial ribosomal protein bL35 family.</text>
</comment>
<feature type="chain" id="PRO_0000177397" description="Large ribosomal subunit protein bL35">
    <location>
        <begin position="1"/>
        <end position="65"/>
    </location>
</feature>